<comment type="catalytic activity">
    <reaction evidence="1">
        <text>(2R)-3-phosphoglycerate + ATP = (2R)-3-phospho-glyceroyl phosphate + ADP</text>
        <dbReference type="Rhea" id="RHEA:14801"/>
        <dbReference type="ChEBI" id="CHEBI:30616"/>
        <dbReference type="ChEBI" id="CHEBI:57604"/>
        <dbReference type="ChEBI" id="CHEBI:58272"/>
        <dbReference type="ChEBI" id="CHEBI:456216"/>
        <dbReference type="EC" id="2.7.2.3"/>
    </reaction>
</comment>
<comment type="pathway">
    <text evidence="1">Carbohydrate degradation; glycolysis; pyruvate from D-glyceraldehyde 3-phosphate: step 2/5.</text>
</comment>
<comment type="subunit">
    <text evidence="1">Monomer.</text>
</comment>
<comment type="subcellular location">
    <subcellularLocation>
        <location evidence="1">Cytoplasm</location>
    </subcellularLocation>
</comment>
<comment type="similarity">
    <text evidence="1">Belongs to the phosphoglycerate kinase family.</text>
</comment>
<proteinExistence type="inferred from homology"/>
<keyword id="KW-0067">ATP-binding</keyword>
<keyword id="KW-0963">Cytoplasm</keyword>
<keyword id="KW-0324">Glycolysis</keyword>
<keyword id="KW-0418">Kinase</keyword>
<keyword id="KW-0547">Nucleotide-binding</keyword>
<keyword id="KW-0808">Transferase</keyword>
<gene>
    <name evidence="1" type="primary">pgk</name>
    <name type="ordered locus">LCABL_11310</name>
</gene>
<organism>
    <name type="scientific">Lacticaseibacillus casei (strain BL23)</name>
    <name type="common">Lactobacillus casei</name>
    <dbReference type="NCBI Taxonomy" id="543734"/>
    <lineage>
        <taxon>Bacteria</taxon>
        <taxon>Bacillati</taxon>
        <taxon>Bacillota</taxon>
        <taxon>Bacilli</taxon>
        <taxon>Lactobacillales</taxon>
        <taxon>Lactobacillaceae</taxon>
        <taxon>Lacticaseibacillus</taxon>
    </lineage>
</organism>
<evidence type="ECO:0000255" key="1">
    <source>
        <dbReference type="HAMAP-Rule" id="MF_00145"/>
    </source>
</evidence>
<sequence>MAKLIVSDLDVKDKKVLIRVDFNVPIKDGVIGDDNRIVAALPTIQYVIDHGGKAILLSHLGRVKTEEDKAKLTLKPVAERLSELLKKPVTFVPATRGKELEDAINKMNDGDVLVMENTRFEDLDGKKESGNDPELGKYWASLGDLFVNDAFGTAHRSHASNVGIASNMKQTAAGFLMEKEIKFLGDAVDNPKHPFIAILGGAKVSDKIGVIENLVPKADKILIGGGMTYTFYAAKGMSIGKSLVEKDKIELAKKIMDQAGDKLLLPVDSVVATEFSNDAPHKVVDGDIPDGYMALDIGPKTIKEFKDALQGAKTVVWNGPMGVFEMSNYAEGTLEVGRALGDLKDATTIIGGGDSTAAAKQLGIAPKITHISTGGGASLEYLEGKTLPGIAAISDK</sequence>
<name>PGK_LACCB</name>
<dbReference type="EC" id="2.7.2.3" evidence="1"/>
<dbReference type="EMBL" id="FM177140">
    <property type="protein sequence ID" value="CAQ66216.1"/>
    <property type="molecule type" value="Genomic_DNA"/>
</dbReference>
<dbReference type="SMR" id="B3WCW5"/>
<dbReference type="KEGG" id="lcb:LCABL_11310"/>
<dbReference type="HOGENOM" id="CLU_025427_0_2_9"/>
<dbReference type="UniPathway" id="UPA00109">
    <property type="reaction ID" value="UER00185"/>
</dbReference>
<dbReference type="GO" id="GO:0005829">
    <property type="term" value="C:cytosol"/>
    <property type="evidence" value="ECO:0007669"/>
    <property type="project" value="TreeGrafter"/>
</dbReference>
<dbReference type="GO" id="GO:0043531">
    <property type="term" value="F:ADP binding"/>
    <property type="evidence" value="ECO:0007669"/>
    <property type="project" value="TreeGrafter"/>
</dbReference>
<dbReference type="GO" id="GO:0005524">
    <property type="term" value="F:ATP binding"/>
    <property type="evidence" value="ECO:0007669"/>
    <property type="project" value="UniProtKB-KW"/>
</dbReference>
<dbReference type="GO" id="GO:0004618">
    <property type="term" value="F:phosphoglycerate kinase activity"/>
    <property type="evidence" value="ECO:0007669"/>
    <property type="project" value="UniProtKB-UniRule"/>
</dbReference>
<dbReference type="GO" id="GO:0006094">
    <property type="term" value="P:gluconeogenesis"/>
    <property type="evidence" value="ECO:0007669"/>
    <property type="project" value="TreeGrafter"/>
</dbReference>
<dbReference type="GO" id="GO:0006096">
    <property type="term" value="P:glycolytic process"/>
    <property type="evidence" value="ECO:0007669"/>
    <property type="project" value="UniProtKB-UniRule"/>
</dbReference>
<dbReference type="CDD" id="cd00318">
    <property type="entry name" value="Phosphoglycerate_kinase"/>
    <property type="match status" value="1"/>
</dbReference>
<dbReference type="FunFam" id="3.40.50.1260:FF:000001">
    <property type="entry name" value="Phosphoglycerate kinase"/>
    <property type="match status" value="1"/>
</dbReference>
<dbReference type="FunFam" id="3.40.50.1260:FF:000008">
    <property type="entry name" value="Phosphoglycerate kinase"/>
    <property type="match status" value="1"/>
</dbReference>
<dbReference type="Gene3D" id="3.40.50.1260">
    <property type="entry name" value="Phosphoglycerate kinase, N-terminal domain"/>
    <property type="match status" value="2"/>
</dbReference>
<dbReference type="HAMAP" id="MF_00145">
    <property type="entry name" value="Phosphoglyc_kinase"/>
    <property type="match status" value="1"/>
</dbReference>
<dbReference type="InterPro" id="IPR001576">
    <property type="entry name" value="Phosphoglycerate_kinase"/>
</dbReference>
<dbReference type="InterPro" id="IPR015911">
    <property type="entry name" value="Phosphoglycerate_kinase_CS"/>
</dbReference>
<dbReference type="InterPro" id="IPR015824">
    <property type="entry name" value="Phosphoglycerate_kinase_N"/>
</dbReference>
<dbReference type="InterPro" id="IPR036043">
    <property type="entry name" value="Phosphoglycerate_kinase_sf"/>
</dbReference>
<dbReference type="PANTHER" id="PTHR11406">
    <property type="entry name" value="PHOSPHOGLYCERATE KINASE"/>
    <property type="match status" value="1"/>
</dbReference>
<dbReference type="PANTHER" id="PTHR11406:SF23">
    <property type="entry name" value="PHOSPHOGLYCERATE KINASE 1, CHLOROPLASTIC-RELATED"/>
    <property type="match status" value="1"/>
</dbReference>
<dbReference type="Pfam" id="PF00162">
    <property type="entry name" value="PGK"/>
    <property type="match status" value="1"/>
</dbReference>
<dbReference type="PIRSF" id="PIRSF000724">
    <property type="entry name" value="Pgk"/>
    <property type="match status" value="1"/>
</dbReference>
<dbReference type="PRINTS" id="PR00477">
    <property type="entry name" value="PHGLYCKINASE"/>
</dbReference>
<dbReference type="SUPFAM" id="SSF53748">
    <property type="entry name" value="Phosphoglycerate kinase"/>
    <property type="match status" value="1"/>
</dbReference>
<dbReference type="PROSITE" id="PS00111">
    <property type="entry name" value="PGLYCERATE_KINASE"/>
    <property type="match status" value="1"/>
</dbReference>
<reference key="1">
    <citation type="submission" date="2008-06" db="EMBL/GenBank/DDBJ databases">
        <title>Lactobacillus casei BL23 complete genome sequence.</title>
        <authorList>
            <person name="Maze A."/>
            <person name="Boel G."/>
            <person name="Bourand A."/>
            <person name="Loux V."/>
            <person name="Gibrat J.F."/>
            <person name="Zuniga M."/>
            <person name="Hartke A."/>
            <person name="Deutscher J."/>
        </authorList>
    </citation>
    <scope>NUCLEOTIDE SEQUENCE [LARGE SCALE GENOMIC DNA]</scope>
    <source>
        <strain>BL23</strain>
    </source>
</reference>
<feature type="chain" id="PRO_1000096350" description="Phosphoglycerate kinase">
    <location>
        <begin position="1"/>
        <end position="396"/>
    </location>
</feature>
<feature type="binding site" evidence="1">
    <location>
        <begin position="21"/>
        <end position="23"/>
    </location>
    <ligand>
        <name>substrate</name>
    </ligand>
</feature>
<feature type="binding site" evidence="1">
    <location>
        <position position="36"/>
    </location>
    <ligand>
        <name>substrate</name>
    </ligand>
</feature>
<feature type="binding site" evidence="1">
    <location>
        <begin position="59"/>
        <end position="62"/>
    </location>
    <ligand>
        <name>substrate</name>
    </ligand>
</feature>
<feature type="binding site" evidence="1">
    <location>
        <position position="119"/>
    </location>
    <ligand>
        <name>substrate</name>
    </ligand>
</feature>
<feature type="binding site" evidence="1">
    <location>
        <position position="156"/>
    </location>
    <ligand>
        <name>substrate</name>
    </ligand>
</feature>
<feature type="binding site" evidence="1">
    <location>
        <position position="207"/>
    </location>
    <ligand>
        <name>ATP</name>
        <dbReference type="ChEBI" id="CHEBI:30616"/>
    </ligand>
</feature>
<feature type="binding site" evidence="1">
    <location>
        <position position="325"/>
    </location>
    <ligand>
        <name>ATP</name>
        <dbReference type="ChEBI" id="CHEBI:30616"/>
    </ligand>
</feature>
<feature type="binding site" evidence="1">
    <location>
        <begin position="352"/>
        <end position="355"/>
    </location>
    <ligand>
        <name>ATP</name>
        <dbReference type="ChEBI" id="CHEBI:30616"/>
    </ligand>
</feature>
<accession>B3WCW5</accession>
<protein>
    <recommendedName>
        <fullName evidence="1">Phosphoglycerate kinase</fullName>
        <ecNumber evidence="1">2.7.2.3</ecNumber>
    </recommendedName>
</protein>